<comment type="function">
    <text evidence="1">Receptor that may play a role in the perception of bitterness and is gustducin-linked. May play a role in sensing the chemical composition of the gastrointestinal content. The activity of this receptor may stimulate alpha gustducin, mediate PLC-beta-2 activation and lead to the gating of TRPM5 (By similarity).</text>
</comment>
<comment type="subcellular location">
    <subcellularLocation>
        <location>Membrane</location>
        <topology>Multi-pass membrane protein</topology>
    </subcellularLocation>
</comment>
<comment type="miscellaneous">
    <text>Most taste cells may be activated by a limited number of bitter compounds; individual taste cells can discriminate among bitter stimuli.</text>
</comment>
<comment type="similarity">
    <text evidence="3">Belongs to the G-protein coupled receptor T2R family.</text>
</comment>
<dbReference type="EMBL" id="AY724933">
    <property type="protein sequence ID" value="AAU21136.1"/>
    <property type="molecule type" value="Genomic_DNA"/>
</dbReference>
<dbReference type="FunCoup" id="Q645Y3">
    <property type="interactions" value="306"/>
</dbReference>
<dbReference type="STRING" id="9593.ENSGGOP00000015064"/>
<dbReference type="GlyCosmos" id="Q645Y3">
    <property type="glycosylation" value="1 site, No reported glycans"/>
</dbReference>
<dbReference type="eggNOG" id="ENOG502S2SI">
    <property type="taxonomic scope" value="Eukaryota"/>
</dbReference>
<dbReference type="InParanoid" id="Q645Y3"/>
<dbReference type="Proteomes" id="UP000001519">
    <property type="component" value="Unplaced"/>
</dbReference>
<dbReference type="GO" id="GO:0016020">
    <property type="term" value="C:membrane"/>
    <property type="evidence" value="ECO:0000318"/>
    <property type="project" value="GO_Central"/>
</dbReference>
<dbReference type="GO" id="GO:0005886">
    <property type="term" value="C:plasma membrane"/>
    <property type="evidence" value="ECO:0007669"/>
    <property type="project" value="UniProtKB-ARBA"/>
</dbReference>
<dbReference type="GO" id="GO:0033038">
    <property type="term" value="F:bitter taste receptor activity"/>
    <property type="evidence" value="ECO:0007669"/>
    <property type="project" value="InterPro"/>
</dbReference>
<dbReference type="GO" id="GO:0004930">
    <property type="term" value="F:G protein-coupled receptor activity"/>
    <property type="evidence" value="ECO:0007669"/>
    <property type="project" value="UniProtKB-KW"/>
</dbReference>
<dbReference type="CDD" id="cd15018">
    <property type="entry name" value="7tm_TAS2R41-like"/>
    <property type="match status" value="1"/>
</dbReference>
<dbReference type="FunFam" id="1.20.1070.10:FF:000055">
    <property type="entry name" value="Taste receptor type 2"/>
    <property type="match status" value="1"/>
</dbReference>
<dbReference type="Gene3D" id="1.20.1070.10">
    <property type="entry name" value="Rhodopsin 7-helix transmembrane proteins"/>
    <property type="match status" value="1"/>
</dbReference>
<dbReference type="InterPro" id="IPR007960">
    <property type="entry name" value="TAS2R"/>
</dbReference>
<dbReference type="PANTHER" id="PTHR11394">
    <property type="entry name" value="TASTE RECEPTOR TYPE 2"/>
    <property type="match status" value="1"/>
</dbReference>
<dbReference type="PANTHER" id="PTHR11394:SF73">
    <property type="entry name" value="TASTE RECEPTOR TYPE 2 MEMBER 41"/>
    <property type="match status" value="1"/>
</dbReference>
<dbReference type="Pfam" id="PF05296">
    <property type="entry name" value="TAS2R"/>
    <property type="match status" value="1"/>
</dbReference>
<dbReference type="SUPFAM" id="SSF81321">
    <property type="entry name" value="Family A G protein-coupled receptor-like"/>
    <property type="match status" value="1"/>
</dbReference>
<accession>Q645Y3</accession>
<keyword id="KW-0297">G-protein coupled receptor</keyword>
<keyword id="KW-0325">Glycoprotein</keyword>
<keyword id="KW-0472">Membrane</keyword>
<keyword id="KW-0675">Receptor</keyword>
<keyword id="KW-1185">Reference proteome</keyword>
<keyword id="KW-0716">Sensory transduction</keyword>
<keyword id="KW-0919">Taste</keyword>
<keyword id="KW-0807">Transducer</keyword>
<keyword id="KW-0812">Transmembrane</keyword>
<keyword id="KW-1133">Transmembrane helix</keyword>
<reference key="1">
    <citation type="journal article" date="2005" name="Mol. Biol. Evol.">
        <title>Evolution of bitter taste receptors in humans and apes.</title>
        <authorList>
            <person name="Fischer A."/>
            <person name="Gilad Y."/>
            <person name="Man O."/>
            <person name="Paeaebo S."/>
        </authorList>
    </citation>
    <scope>NUCLEOTIDE SEQUENCE [GENOMIC DNA]</scope>
</reference>
<feature type="chain" id="PRO_0000082294" description="Taste receptor type 2 member 41">
    <location>
        <begin position="1"/>
        <end position="307"/>
    </location>
</feature>
<feature type="topological domain" description="Extracellular" evidence="2">
    <location>
        <begin position="1"/>
        <end position="7"/>
    </location>
</feature>
<feature type="transmembrane region" description="Helical; Name=1" evidence="2">
    <location>
        <begin position="8"/>
        <end position="28"/>
    </location>
</feature>
<feature type="topological domain" description="Cytoplasmic" evidence="2">
    <location>
        <begin position="29"/>
        <end position="40"/>
    </location>
</feature>
<feature type="transmembrane region" description="Helical; Name=2" evidence="2">
    <location>
        <begin position="41"/>
        <end position="61"/>
    </location>
</feature>
<feature type="topological domain" description="Extracellular" evidence="2">
    <location>
        <begin position="62"/>
        <end position="88"/>
    </location>
</feature>
<feature type="transmembrane region" description="Helical; Name=3" evidence="2">
    <location>
        <begin position="89"/>
        <end position="109"/>
    </location>
</feature>
<feature type="topological domain" description="Cytoplasmic" evidence="2">
    <location>
        <begin position="110"/>
        <end position="129"/>
    </location>
</feature>
<feature type="transmembrane region" description="Helical; Name=4" evidence="2">
    <location>
        <begin position="130"/>
        <end position="150"/>
    </location>
</feature>
<feature type="topological domain" description="Extracellular" evidence="2">
    <location>
        <begin position="151"/>
        <end position="183"/>
    </location>
</feature>
<feature type="transmembrane region" description="Helical; Name=5" evidence="2">
    <location>
        <begin position="184"/>
        <end position="204"/>
    </location>
</feature>
<feature type="topological domain" description="Cytoplasmic" evidence="2">
    <location>
        <begin position="205"/>
        <end position="234"/>
    </location>
</feature>
<feature type="transmembrane region" description="Helical; Name=6" evidence="2">
    <location>
        <begin position="235"/>
        <end position="255"/>
    </location>
</feature>
<feature type="topological domain" description="Extracellular" evidence="2">
    <location>
        <begin position="256"/>
        <end position="264"/>
    </location>
</feature>
<feature type="transmembrane region" description="Helical; Name=7" evidence="2">
    <location>
        <begin position="265"/>
        <end position="285"/>
    </location>
</feature>
<feature type="topological domain" description="Cytoplasmic" evidence="2">
    <location>
        <begin position="286"/>
        <end position="307"/>
    </location>
</feature>
<feature type="glycosylation site" description="N-linked (GlcNAc...) asparagine" evidence="2">
    <location>
        <position position="167"/>
    </location>
</feature>
<gene>
    <name type="primary">TAS2R41</name>
</gene>
<sequence length="307" mass="36107">MQAALMAFFMLLFSLLSLLGIAANGFIVLVLGREWLRYGRLLPLDMILISLGASRXCLQLVGTVHNFYYSARKVEYSGGLGRQFFHLHWHFLNSATFWFCSWLSVLFCVKIANITHPTFLWLKWRFPGWVPWLLLGSVLISFIITLLFFWVNYPVYQELLIRKFSGNMTYKWNTRIETYYFPSLKLVIWSIPFSVFLVSIMLLINSLRRHTQRMQHNGHSLQDPSTQAHTRALKSLISFLFLYALSFLSLIIDATKFISMQNDFYWPWQIAVYLCISVHPFILIFSNLKLRSMFWQVLLLARGFWVA</sequence>
<protein>
    <recommendedName>
        <fullName>Taste receptor type 2 member 41</fullName>
        <shortName>T2R41</shortName>
    </recommendedName>
</protein>
<name>T2R41_GORGO</name>
<proteinExistence type="inferred from homology"/>
<organism>
    <name type="scientific">Gorilla gorilla gorilla</name>
    <name type="common">Western lowland gorilla</name>
    <dbReference type="NCBI Taxonomy" id="9595"/>
    <lineage>
        <taxon>Eukaryota</taxon>
        <taxon>Metazoa</taxon>
        <taxon>Chordata</taxon>
        <taxon>Craniata</taxon>
        <taxon>Vertebrata</taxon>
        <taxon>Euteleostomi</taxon>
        <taxon>Mammalia</taxon>
        <taxon>Eutheria</taxon>
        <taxon>Euarchontoglires</taxon>
        <taxon>Primates</taxon>
        <taxon>Haplorrhini</taxon>
        <taxon>Catarrhini</taxon>
        <taxon>Hominidae</taxon>
        <taxon>Gorilla</taxon>
    </lineage>
</organism>
<evidence type="ECO:0000250" key="1"/>
<evidence type="ECO:0000255" key="2"/>
<evidence type="ECO:0000305" key="3"/>